<sequence>MAVKVGINGFGRIGRIVLRNAIIHGDIDVVAINDPFIDLEYMVYMFKYDSTHGVFKGSVEIKDGKLVIEGKPIVVYGERDPANIQWGAAGADYVVESTGVFTTQEKAELHLKGGAKKVVISAPSADAPMFVCGVNLDKYDPKYTVVSNASCTTNCLAPLGKVIHDNYTIVEGLMTTVHATTATQKTVDGPSNKDWRGGRGAGANIIPSSTGAAKAVGKVIPSLNGKLTGMAFRVPTPDVSVVDLVVRIEKGASYEEIKETIKKASQTPELKGILNYTDDQVVSTDFTGDSASSTFDAQGGISLNGNFVKLVSWYDNEWGYSARVCDLVSYIAAQDAKA</sequence>
<organism>
    <name type="scientific">Phaffia rhodozyma</name>
    <name type="common">Yeast</name>
    <name type="synonym">Xanthophyllomyces dendrorhous</name>
    <dbReference type="NCBI Taxonomy" id="264483"/>
    <lineage>
        <taxon>Eukaryota</taxon>
        <taxon>Fungi</taxon>
        <taxon>Dikarya</taxon>
        <taxon>Basidiomycota</taxon>
        <taxon>Agaricomycotina</taxon>
        <taxon>Tremellomycetes</taxon>
        <taxon>Cystofilobasidiales</taxon>
        <taxon>Mrakiaceae</taxon>
        <taxon>Phaffia</taxon>
    </lineage>
</organism>
<feature type="chain" id="PRO_0000145568" description="Glyceraldehyde-3-phosphate dehydrogenase">
    <location>
        <begin position="1"/>
        <end position="338"/>
    </location>
</feature>
<feature type="active site" description="Nucleophile" evidence="2">
    <location>
        <position position="151"/>
    </location>
</feature>
<feature type="binding site" evidence="1">
    <location>
        <begin position="12"/>
        <end position="13"/>
    </location>
    <ligand>
        <name>NAD(+)</name>
        <dbReference type="ChEBI" id="CHEBI:57540"/>
    </ligand>
</feature>
<feature type="binding site" evidence="1">
    <location>
        <position position="34"/>
    </location>
    <ligand>
        <name>NAD(+)</name>
        <dbReference type="ChEBI" id="CHEBI:57540"/>
    </ligand>
</feature>
<feature type="binding site" evidence="1">
    <location>
        <position position="79"/>
    </location>
    <ligand>
        <name>NAD(+)</name>
        <dbReference type="ChEBI" id="CHEBI:57540"/>
    </ligand>
</feature>
<feature type="binding site" evidence="1">
    <location>
        <begin position="150"/>
        <end position="152"/>
    </location>
    <ligand>
        <name>D-glyceraldehyde 3-phosphate</name>
        <dbReference type="ChEBI" id="CHEBI:59776"/>
    </ligand>
</feature>
<feature type="binding site" evidence="1">
    <location>
        <position position="181"/>
    </location>
    <ligand>
        <name>D-glyceraldehyde 3-phosphate</name>
        <dbReference type="ChEBI" id="CHEBI:59776"/>
    </ligand>
</feature>
<feature type="binding site" evidence="1">
    <location>
        <begin position="210"/>
        <end position="211"/>
    </location>
    <ligand>
        <name>D-glyceraldehyde 3-phosphate</name>
        <dbReference type="ChEBI" id="CHEBI:59776"/>
    </ligand>
</feature>
<feature type="binding site" evidence="1">
    <location>
        <position position="233"/>
    </location>
    <ligand>
        <name>D-glyceraldehyde 3-phosphate</name>
        <dbReference type="ChEBI" id="CHEBI:59776"/>
    </ligand>
</feature>
<feature type="binding site" evidence="1">
    <location>
        <position position="316"/>
    </location>
    <ligand>
        <name>NAD(+)</name>
        <dbReference type="ChEBI" id="CHEBI:57540"/>
    </ligand>
</feature>
<feature type="site" description="Activates thiol group during catalysis" evidence="1">
    <location>
        <position position="178"/>
    </location>
</feature>
<feature type="sequence conflict" description="In Ref. 2; AAF21599." evidence="3" ref="2">
    <original>G</original>
    <variation>A</variation>
    <location>
        <position position="160"/>
    </location>
</feature>
<feature type="sequence conflict" description="In Ref. 2; AAF21599." evidence="3" ref="2">
    <original>G</original>
    <variation>A</variation>
    <location>
        <position position="251"/>
    </location>
</feature>
<feature type="sequence conflict" description="In Ref. 2; AAF21599." evidence="3" ref="2">
    <original>G</original>
    <variation>A</variation>
    <location>
        <position position="299"/>
    </location>
</feature>
<reference key="1">
    <citation type="journal article" date="1997" name="Yeast">
        <title>Molecular characterization of the glyceraldehyde-3-phosphate dehydrogenase gene of Phaffia rhodozyma.</title>
        <authorList>
            <person name="Verdoes J.C."/>
            <person name="Wery J."/>
            <person name="Boekhout T."/>
            <person name="van Ooyen A.J.J."/>
        </authorList>
    </citation>
    <scope>NUCLEOTIDE SEQUENCE [GENOMIC DNA]</scope>
    <source>
        <strain>ATCC 96594 / BCRC 22365 / CBS 6938 / JCM 9684 / VKM Y-2793</strain>
    </source>
</reference>
<reference key="2">
    <citation type="submission" date="1997-06" db="EMBL/GenBank/DDBJ databases">
        <title>Isolation and characterization of the gene encoding glyceraldehyde-3-phosphate dehydrogenase Of Phaffia rhodozyma.</title>
        <authorList>
            <person name="Choi E.S."/>
            <person name="Nam S.G."/>
            <person name="Kim I.G."/>
            <person name="Rhee S.K."/>
        </authorList>
    </citation>
    <scope>NUCLEOTIDE SEQUENCE [GENOMIC DNA]</scope>
    <source>
        <strain>67-385</strain>
    </source>
</reference>
<dbReference type="EC" id="1.2.1.12"/>
<dbReference type="EMBL" id="Y08366">
    <property type="protein sequence ID" value="CAA69652.1"/>
    <property type="molecule type" value="Genomic_DNA"/>
</dbReference>
<dbReference type="EMBL" id="AF006483">
    <property type="protein sequence ID" value="AAF21599.1"/>
    <property type="molecule type" value="Genomic_DNA"/>
</dbReference>
<dbReference type="SMR" id="O13507"/>
<dbReference type="UniPathway" id="UPA00109">
    <property type="reaction ID" value="UER00184"/>
</dbReference>
<dbReference type="GO" id="GO:0005829">
    <property type="term" value="C:cytosol"/>
    <property type="evidence" value="ECO:0007669"/>
    <property type="project" value="TreeGrafter"/>
</dbReference>
<dbReference type="GO" id="GO:0004365">
    <property type="term" value="F:glyceraldehyde-3-phosphate dehydrogenase (NAD+) (phosphorylating) activity"/>
    <property type="evidence" value="ECO:0007669"/>
    <property type="project" value="UniProtKB-EC"/>
</dbReference>
<dbReference type="GO" id="GO:0051287">
    <property type="term" value="F:NAD binding"/>
    <property type="evidence" value="ECO:0007669"/>
    <property type="project" value="InterPro"/>
</dbReference>
<dbReference type="GO" id="GO:0050661">
    <property type="term" value="F:NADP binding"/>
    <property type="evidence" value="ECO:0007669"/>
    <property type="project" value="InterPro"/>
</dbReference>
<dbReference type="GO" id="GO:0006006">
    <property type="term" value="P:glucose metabolic process"/>
    <property type="evidence" value="ECO:0007669"/>
    <property type="project" value="InterPro"/>
</dbReference>
<dbReference type="GO" id="GO:0006096">
    <property type="term" value="P:glycolytic process"/>
    <property type="evidence" value="ECO:0007669"/>
    <property type="project" value="UniProtKB-UniPathway"/>
</dbReference>
<dbReference type="CDD" id="cd18126">
    <property type="entry name" value="GAPDH_I_C"/>
    <property type="match status" value="1"/>
</dbReference>
<dbReference type="CDD" id="cd05214">
    <property type="entry name" value="GAPDH_I_N"/>
    <property type="match status" value="1"/>
</dbReference>
<dbReference type="FunFam" id="3.30.360.10:FF:000001">
    <property type="entry name" value="Glyceraldehyde-3-phosphate dehydrogenase"/>
    <property type="match status" value="1"/>
</dbReference>
<dbReference type="FunFam" id="3.40.50.720:FF:000266">
    <property type="entry name" value="Glyceraldehyde-3-phosphate dehydrogenase"/>
    <property type="match status" value="1"/>
</dbReference>
<dbReference type="Gene3D" id="3.30.360.10">
    <property type="entry name" value="Dihydrodipicolinate Reductase, domain 2"/>
    <property type="match status" value="1"/>
</dbReference>
<dbReference type="Gene3D" id="3.40.50.720">
    <property type="entry name" value="NAD(P)-binding Rossmann-like Domain"/>
    <property type="match status" value="1"/>
</dbReference>
<dbReference type="InterPro" id="IPR020831">
    <property type="entry name" value="GlycerAld/Erythrose_P_DH"/>
</dbReference>
<dbReference type="InterPro" id="IPR020830">
    <property type="entry name" value="GlycerAld_3-P_DH_AS"/>
</dbReference>
<dbReference type="InterPro" id="IPR020829">
    <property type="entry name" value="GlycerAld_3-P_DH_cat"/>
</dbReference>
<dbReference type="InterPro" id="IPR020828">
    <property type="entry name" value="GlycerAld_3-P_DH_NAD(P)-bd"/>
</dbReference>
<dbReference type="InterPro" id="IPR006424">
    <property type="entry name" value="Glyceraldehyde-3-P_DH_1"/>
</dbReference>
<dbReference type="InterPro" id="IPR036291">
    <property type="entry name" value="NAD(P)-bd_dom_sf"/>
</dbReference>
<dbReference type="NCBIfam" id="TIGR01534">
    <property type="entry name" value="GAPDH-I"/>
    <property type="match status" value="1"/>
</dbReference>
<dbReference type="PANTHER" id="PTHR10836">
    <property type="entry name" value="GLYCERALDEHYDE 3-PHOSPHATE DEHYDROGENASE"/>
    <property type="match status" value="1"/>
</dbReference>
<dbReference type="PANTHER" id="PTHR10836:SF76">
    <property type="entry name" value="GLYCERALDEHYDE-3-PHOSPHATE DEHYDROGENASE-RELATED"/>
    <property type="match status" value="1"/>
</dbReference>
<dbReference type="Pfam" id="PF02800">
    <property type="entry name" value="Gp_dh_C"/>
    <property type="match status" value="1"/>
</dbReference>
<dbReference type="Pfam" id="PF00044">
    <property type="entry name" value="Gp_dh_N"/>
    <property type="match status" value="1"/>
</dbReference>
<dbReference type="PIRSF" id="PIRSF000149">
    <property type="entry name" value="GAP_DH"/>
    <property type="match status" value="1"/>
</dbReference>
<dbReference type="PRINTS" id="PR00078">
    <property type="entry name" value="G3PDHDRGNASE"/>
</dbReference>
<dbReference type="SMART" id="SM00846">
    <property type="entry name" value="Gp_dh_N"/>
    <property type="match status" value="1"/>
</dbReference>
<dbReference type="SUPFAM" id="SSF55347">
    <property type="entry name" value="Glyceraldehyde-3-phosphate dehydrogenase-like, C-terminal domain"/>
    <property type="match status" value="1"/>
</dbReference>
<dbReference type="SUPFAM" id="SSF51735">
    <property type="entry name" value="NAD(P)-binding Rossmann-fold domains"/>
    <property type="match status" value="1"/>
</dbReference>
<dbReference type="PROSITE" id="PS00071">
    <property type="entry name" value="GAPDH"/>
    <property type="match status" value="1"/>
</dbReference>
<protein>
    <recommendedName>
        <fullName>Glyceraldehyde-3-phosphate dehydrogenase</fullName>
        <shortName>GAPDH</shortName>
        <ecNumber>1.2.1.12</ecNumber>
    </recommendedName>
</protein>
<evidence type="ECO:0000250" key="1"/>
<evidence type="ECO:0000255" key="2">
    <source>
        <dbReference type="PROSITE-ProRule" id="PRU10009"/>
    </source>
</evidence>
<evidence type="ECO:0000305" key="3"/>
<keyword id="KW-0963">Cytoplasm</keyword>
<keyword id="KW-0324">Glycolysis</keyword>
<keyword id="KW-0520">NAD</keyword>
<keyword id="KW-0560">Oxidoreductase</keyword>
<name>G3P_PHARH</name>
<comment type="catalytic activity">
    <reaction evidence="2">
        <text>D-glyceraldehyde 3-phosphate + phosphate + NAD(+) = (2R)-3-phospho-glyceroyl phosphate + NADH + H(+)</text>
        <dbReference type="Rhea" id="RHEA:10300"/>
        <dbReference type="ChEBI" id="CHEBI:15378"/>
        <dbReference type="ChEBI" id="CHEBI:43474"/>
        <dbReference type="ChEBI" id="CHEBI:57540"/>
        <dbReference type="ChEBI" id="CHEBI:57604"/>
        <dbReference type="ChEBI" id="CHEBI:57945"/>
        <dbReference type="ChEBI" id="CHEBI:59776"/>
        <dbReference type="EC" id="1.2.1.12"/>
    </reaction>
</comment>
<comment type="pathway">
    <text>Carbohydrate degradation; glycolysis; pyruvate from D-glyceraldehyde 3-phosphate: step 1/5.</text>
</comment>
<comment type="subunit">
    <text>Homotetramer.</text>
</comment>
<comment type="subcellular location">
    <subcellularLocation>
        <location>Cytoplasm</location>
    </subcellularLocation>
</comment>
<comment type="similarity">
    <text evidence="3">Belongs to the glyceraldehyde-3-phosphate dehydrogenase family.</text>
</comment>
<gene>
    <name type="primary">GPD</name>
</gene>
<proteinExistence type="inferred from homology"/>
<accession>O13507</accession>
<accession>Q9UVD2</accession>